<evidence type="ECO:0000256" key="1">
    <source>
        <dbReference type="SAM" id="MobiDB-lite"/>
    </source>
</evidence>
<evidence type="ECO:0000269" key="2">
    <source>
    </source>
</evidence>
<evidence type="ECO:0000269" key="3">
    <source>
    </source>
</evidence>
<evidence type="ECO:0000269" key="4">
    <source>
    </source>
</evidence>
<evidence type="ECO:0000269" key="5">
    <source>
    </source>
</evidence>
<evidence type="ECO:0000269" key="6">
    <source>
    </source>
</evidence>
<evidence type="ECO:0000269" key="7">
    <source>
    </source>
</evidence>
<evidence type="ECO:0000305" key="8"/>
<evidence type="ECO:0000305" key="9">
    <source>
    </source>
</evidence>
<evidence type="ECO:0000305" key="10">
    <source>
    </source>
</evidence>
<accession>Q8BQP9</accession>
<accession>Q0VF69</accession>
<accession>Q3UVC4</accession>
<accession>Q8CBD6</accession>
<accession>Q9CTP1</accession>
<gene>
    <name type="primary">Rgs7bp</name>
    <name type="synonym">D13Bwg1146e</name>
    <name type="synonym">R7bp</name>
</gene>
<keyword id="KW-1003">Cell membrane</keyword>
<keyword id="KW-0963">Cytoplasm</keyword>
<keyword id="KW-0449">Lipoprotein</keyword>
<keyword id="KW-0472">Membrane</keyword>
<keyword id="KW-0539">Nucleus</keyword>
<keyword id="KW-0564">Palmitate</keyword>
<keyword id="KW-1185">Reference proteome</keyword>
<keyword id="KW-0734">Signal transduction inhibitor</keyword>
<comment type="function">
    <text evidence="3 4 5 6">Regulator of G protein-coupled receptor (GPCR) signaling. Regulatory subunit of the R7-Gbeta5 complexes that acts by controlling the subcellular location of the R7-Gbeta5 complexes. When palmitoylated, it targets the R7-Gbeta5 complexes to the plasma membrane, leading to inhibit G protein alpha subunits. When it is unpalmitoylated, the R7-Gbeta5 complexes undergo a nuclear/cytoplasmic shuttling. May also act by controlling the proteolytic stability of R7 proteins, probably by protecting them from degradation.</text>
</comment>
<comment type="subunit">
    <text evidence="2 3">Interacts with 'R7' family proteins RGS6, RGS7, RGS9 and RGS11. Component of some R7-Gbeta5 complex composed of some R7 protein (RGS6, RGS7, RGS9 or RGS11), Gbeta5 (GNB5) and RGS7BP.</text>
</comment>
<comment type="subcellular location">
    <subcellularLocation>
        <location evidence="3 4 5 7">Nucleus</location>
    </subcellularLocation>
    <subcellularLocation>
        <location evidence="3 4">Cytoplasm</location>
    </subcellularLocation>
    <subcellularLocation>
        <location evidence="3 4 5 7">Cell membrane</location>
        <topology evidence="3 5">Lipid-anchor</topology>
    </subcellularLocation>
    <text evidence="3 7">Shuttling between the plasma membrane, the cytoplasm and the nucleus is regulated by palmitoylation (PubMed:15897264, PubMed:21343290).</text>
</comment>
<comment type="tissue specificity">
    <text evidence="2 3">Specifically expressed in the central nervous system including the retina but not in other non-neuronal tissues (at protein level).</text>
</comment>
<comment type="domain">
    <text evidence="5">The nuclear localization signal is both required for nuclear localization and palmitoylation.</text>
</comment>
<comment type="PTM">
    <text evidence="3 4 5 7">Palmitoylated (PubMed:15897264, PubMed:16574655, PubMed:21343290). Undergoes rapid palmitoylation turnover (PubMed:21343290). De novo and turnover palmitoylation are both mediated by ZDHHC2 (PubMed:21343290). Palmitoylation regulates the cell membrane and nuclear shuttling and the regulation of GPCR signaling (PubMed:15897264, PubMed:16574655, PubMed:16867977, PubMed:21343290). Upon depalmitoylation, it is targeted from the plasma membrane into the nucleus (PubMed:15897264, PubMed:16574655). GPCR signaling inhibits depalmitoylation and promotes localization to the plasma membrane (PubMed:21343290).</text>
</comment>
<comment type="similarity">
    <text evidence="8">Belongs to the RGS7BP/RGS9BP family.</text>
</comment>
<comment type="sequence caution" evidence="8">
    <conflict type="frameshift">
        <sequence resource="EMBL-CDS" id="BAC29358"/>
    </conflict>
</comment>
<dbReference type="EMBL" id="DQ104214">
    <property type="protein sequence ID" value="AAZ09201.1"/>
    <property type="molecule type" value="mRNA"/>
</dbReference>
<dbReference type="EMBL" id="AK020910">
    <property type="protein sequence ID" value="BAB32250.1"/>
    <property type="molecule type" value="mRNA"/>
</dbReference>
<dbReference type="EMBL" id="AK036240">
    <property type="protein sequence ID" value="BAC29358.1"/>
    <property type="status" value="ALT_FRAME"/>
    <property type="molecule type" value="mRNA"/>
</dbReference>
<dbReference type="EMBL" id="AK046733">
    <property type="protein sequence ID" value="BAC32849.1"/>
    <property type="molecule type" value="mRNA"/>
</dbReference>
<dbReference type="EMBL" id="AK137417">
    <property type="protein sequence ID" value="BAE23346.1"/>
    <property type="molecule type" value="mRNA"/>
</dbReference>
<dbReference type="EMBL" id="BC118957">
    <property type="protein sequence ID" value="AAI18958.1"/>
    <property type="molecule type" value="mRNA"/>
</dbReference>
<dbReference type="CCDS" id="CCDS36774.1"/>
<dbReference type="RefSeq" id="NP_084155.2">
    <property type="nucleotide sequence ID" value="NM_029879.2"/>
</dbReference>
<dbReference type="SMR" id="Q8BQP9"/>
<dbReference type="BioGRID" id="206866">
    <property type="interactions" value="6"/>
</dbReference>
<dbReference type="CORUM" id="Q8BQP9"/>
<dbReference type="FunCoup" id="Q8BQP9">
    <property type="interactions" value="429"/>
</dbReference>
<dbReference type="STRING" id="10090.ENSMUSP00000066614"/>
<dbReference type="iPTMnet" id="Q8BQP9"/>
<dbReference type="PhosphoSitePlus" id="Q8BQP9"/>
<dbReference type="SwissPalm" id="Q8BQP9"/>
<dbReference type="PaxDb" id="10090-ENSMUSP00000066614"/>
<dbReference type="PeptideAtlas" id="Q8BQP9"/>
<dbReference type="ProteomicsDB" id="255062"/>
<dbReference type="Antibodypedia" id="63779">
    <property type="antibodies" value="10 antibodies from 7 providers"/>
</dbReference>
<dbReference type="DNASU" id="52882"/>
<dbReference type="Ensembl" id="ENSMUST00000063551.7">
    <property type="protein sequence ID" value="ENSMUSP00000066614.6"/>
    <property type="gene ID" value="ENSMUSG00000021719.10"/>
</dbReference>
<dbReference type="GeneID" id="52882"/>
<dbReference type="KEGG" id="mmu:52882"/>
<dbReference type="UCSC" id="uc007rtp.1">
    <property type="organism name" value="mouse"/>
</dbReference>
<dbReference type="AGR" id="MGI:106334"/>
<dbReference type="CTD" id="401190"/>
<dbReference type="MGI" id="MGI:106334">
    <property type="gene designation" value="Rgs7bp"/>
</dbReference>
<dbReference type="VEuPathDB" id="HostDB:ENSMUSG00000021719"/>
<dbReference type="eggNOG" id="ENOG502QPUF">
    <property type="taxonomic scope" value="Eukaryota"/>
</dbReference>
<dbReference type="GeneTree" id="ENSGT00940000153725"/>
<dbReference type="HOGENOM" id="CLU_112711_0_0_1"/>
<dbReference type="InParanoid" id="Q8BQP9"/>
<dbReference type="OMA" id="KDMRDMK"/>
<dbReference type="OrthoDB" id="9876293at2759"/>
<dbReference type="PhylomeDB" id="Q8BQP9"/>
<dbReference type="TreeFam" id="TF330985"/>
<dbReference type="BioGRID-ORCS" id="52882">
    <property type="hits" value="1 hit in 75 CRISPR screens"/>
</dbReference>
<dbReference type="CD-CODE" id="CE726F99">
    <property type="entry name" value="Postsynaptic density"/>
</dbReference>
<dbReference type="ChiTaRS" id="Rgs7bp">
    <property type="organism name" value="mouse"/>
</dbReference>
<dbReference type="PRO" id="PR:Q8BQP9"/>
<dbReference type="Proteomes" id="UP000000589">
    <property type="component" value="Chromosome 13"/>
</dbReference>
<dbReference type="RNAct" id="Q8BQP9">
    <property type="molecule type" value="protein"/>
</dbReference>
<dbReference type="Bgee" id="ENSMUSG00000021719">
    <property type="expression patterns" value="Expressed in caudate-putamen and 168 other cell types or tissues"/>
</dbReference>
<dbReference type="GO" id="GO:0030424">
    <property type="term" value="C:axon"/>
    <property type="evidence" value="ECO:0007669"/>
    <property type="project" value="Ensembl"/>
</dbReference>
<dbReference type="GO" id="GO:0005737">
    <property type="term" value="C:cytoplasm"/>
    <property type="evidence" value="ECO:0000314"/>
    <property type="project" value="MGI"/>
</dbReference>
<dbReference type="GO" id="GO:0043198">
    <property type="term" value="C:dendritic shaft"/>
    <property type="evidence" value="ECO:0007669"/>
    <property type="project" value="Ensembl"/>
</dbReference>
<dbReference type="GO" id="GO:0044327">
    <property type="term" value="C:dendritic spine head"/>
    <property type="evidence" value="ECO:0007669"/>
    <property type="project" value="Ensembl"/>
</dbReference>
<dbReference type="GO" id="GO:0098978">
    <property type="term" value="C:glutamatergic synapse"/>
    <property type="evidence" value="ECO:0000314"/>
    <property type="project" value="SynGO"/>
</dbReference>
<dbReference type="GO" id="GO:0005634">
    <property type="term" value="C:nucleus"/>
    <property type="evidence" value="ECO:0000314"/>
    <property type="project" value="MGI"/>
</dbReference>
<dbReference type="GO" id="GO:0043204">
    <property type="term" value="C:perikaryon"/>
    <property type="evidence" value="ECO:0007669"/>
    <property type="project" value="Ensembl"/>
</dbReference>
<dbReference type="GO" id="GO:0005886">
    <property type="term" value="C:plasma membrane"/>
    <property type="evidence" value="ECO:0000314"/>
    <property type="project" value="UniProtKB"/>
</dbReference>
<dbReference type="GO" id="GO:0098794">
    <property type="term" value="C:postsynapse"/>
    <property type="evidence" value="ECO:0000314"/>
    <property type="project" value="SynGO"/>
</dbReference>
<dbReference type="GO" id="GO:0098839">
    <property type="term" value="C:postsynaptic density membrane"/>
    <property type="evidence" value="ECO:0000314"/>
    <property type="project" value="SynGO"/>
</dbReference>
<dbReference type="GO" id="GO:0098793">
    <property type="term" value="C:presynapse"/>
    <property type="evidence" value="ECO:0000314"/>
    <property type="project" value="SynGO"/>
</dbReference>
<dbReference type="GO" id="GO:0042734">
    <property type="term" value="C:presynaptic membrane"/>
    <property type="evidence" value="ECO:0000314"/>
    <property type="project" value="SynGO"/>
</dbReference>
<dbReference type="GO" id="GO:0007186">
    <property type="term" value="P:G protein-coupled receptor signaling pathway"/>
    <property type="evidence" value="ECO:0000314"/>
    <property type="project" value="MGI"/>
</dbReference>
<dbReference type="GO" id="GO:0009968">
    <property type="term" value="P:negative regulation of signal transduction"/>
    <property type="evidence" value="ECO:0007669"/>
    <property type="project" value="UniProtKB-KW"/>
</dbReference>
<dbReference type="GO" id="GO:0060078">
    <property type="term" value="P:regulation of postsynaptic membrane potential"/>
    <property type="evidence" value="ECO:0000314"/>
    <property type="project" value="SynGO"/>
</dbReference>
<dbReference type="InterPro" id="IPR026512">
    <property type="entry name" value="RGS7BP/RGS9BP"/>
</dbReference>
<dbReference type="PANTHER" id="PTHR21029">
    <property type="entry name" value="R-SEVEN BINDING PROTEIN (R7BP) HOMOLOG"/>
    <property type="match status" value="1"/>
</dbReference>
<name>R7BP_MOUSE</name>
<organism>
    <name type="scientific">Mus musculus</name>
    <name type="common">Mouse</name>
    <dbReference type="NCBI Taxonomy" id="10090"/>
    <lineage>
        <taxon>Eukaryota</taxon>
        <taxon>Metazoa</taxon>
        <taxon>Chordata</taxon>
        <taxon>Craniata</taxon>
        <taxon>Vertebrata</taxon>
        <taxon>Euteleostomi</taxon>
        <taxon>Mammalia</taxon>
        <taxon>Eutheria</taxon>
        <taxon>Euarchontoglires</taxon>
        <taxon>Glires</taxon>
        <taxon>Rodentia</taxon>
        <taxon>Myomorpha</taxon>
        <taxon>Muroidea</taxon>
        <taxon>Muridae</taxon>
        <taxon>Murinae</taxon>
        <taxon>Mus</taxon>
        <taxon>Mus</taxon>
    </lineage>
</organism>
<sequence length="257" mass="29023">MSSAPNGRKKRPSRSTRSSIFQISKPPLQSGDWERRGSGSESAHKTQRALDDCKMLVQEFNTQVALYRELVISIGDVSVSCPSLRAEMHKTRTKGCEMARQAHQKLAAISGPEDGEIHPEICRLYIQLQCCLEMYTTEMLKSICLLGSLQFHRKGKEASGGAKNLDSKIEENAETPALEDSLSSPLESQQQCWQVATDIENTERDMREMKNLLSKLRETMPLPLKNQDDSSLLNLTPYPMVRRRKRRFFGLCCLVSS</sequence>
<protein>
    <recommendedName>
        <fullName>Regulator of G-protein signaling 7-binding protein</fullName>
    </recommendedName>
    <alternativeName>
        <fullName>R7 family-binding protein</fullName>
    </alternativeName>
</protein>
<feature type="chain" id="PRO_0000287596" description="Regulator of G-protein signaling 7-binding protein">
    <location>
        <begin position="1"/>
        <end position="257"/>
    </location>
</feature>
<feature type="region of interest" description="Disordered" evidence="1">
    <location>
        <begin position="1"/>
        <end position="45"/>
    </location>
</feature>
<feature type="short sequence motif" description="Nuclear localization signal" evidence="4 5">
    <location>
        <begin position="242"/>
        <end position="247"/>
    </location>
</feature>
<feature type="compositionally biased region" description="Basic and acidic residues" evidence="1">
    <location>
        <begin position="32"/>
        <end position="45"/>
    </location>
</feature>
<feature type="lipid moiety-binding region" description="S-palmitoyl cysteine" evidence="9 10">
    <location>
        <position position="252"/>
    </location>
</feature>
<feature type="lipid moiety-binding region" description="S-palmitoyl cysteine" evidence="9 10">
    <location>
        <position position="253"/>
    </location>
</feature>
<feature type="mutagenesis site" description="Abolishes nuclear localization and palmitoylation." evidence="5">
    <location>
        <begin position="242"/>
        <end position="247"/>
    </location>
</feature>
<feature type="mutagenesis site" description="Abolishes nuclear localization; when associated with E-246." evidence="4">
    <original>R</original>
    <variation>E</variation>
    <location>
        <position position="243"/>
    </location>
</feature>
<feature type="mutagenesis site" description="Abolishes nuclear localization; when associated with E-243." evidence="4">
    <original>R</original>
    <variation>E</variation>
    <location>
        <position position="246"/>
    </location>
</feature>
<feature type="mutagenesis site" description="Abolishes palmitoylation." evidence="4">
    <original>CC</original>
    <variation>AA</variation>
    <location>
        <begin position="252"/>
        <end position="253"/>
    </location>
</feature>
<feature type="mutagenesis site" description="Strongly reduces palmitoylation and its ability to regulate GPCR signaling. Abolishes palmitoylation and its ability to regulate GPCR signaling; when associated with S-253." evidence="3">
    <original>C</original>
    <variation>S</variation>
    <location>
        <position position="252"/>
    </location>
</feature>
<feature type="mutagenesis site" description="Strongly reduces palmitoylation and its ability to regulate GPCR signaling. Abolishes palmitoylation and its ability to regulate GPCR signaling; when associated with S-252." evidence="3">
    <original>C</original>
    <variation>S</variation>
    <location>
        <position position="253"/>
    </location>
</feature>
<feature type="sequence conflict" description="In Ref. 2; BAB32250." evidence="8" ref="2">
    <original>S</original>
    <variation>A</variation>
    <location>
        <position position="15"/>
    </location>
</feature>
<feature type="sequence conflict" description="In Ref. 2; BAB32250." evidence="8" ref="2">
    <original>Q</original>
    <variation>R</variation>
    <location>
        <position position="47"/>
    </location>
</feature>
<feature type="sequence conflict" description="In Ref. 2; BAB32250." evidence="8" ref="2">
    <original>S</original>
    <variation>F</variation>
    <location>
        <position position="73"/>
    </location>
</feature>
<feature type="sequence conflict" description="In Ref. 2; BAE23346." evidence="8" ref="2">
    <original>E</original>
    <variation>Q</variation>
    <location>
        <position position="138"/>
    </location>
</feature>
<feature type="sequence conflict" description="In Ref. 2; BAB32250." evidence="8" ref="2">
    <original>L</original>
    <variation>V</variation>
    <location>
        <position position="146"/>
    </location>
</feature>
<feature type="sequence conflict" description="In Ref. 3; AAI18958." evidence="8" ref="3">
    <original>S</original>
    <variation>G</variation>
    <location>
        <position position="188"/>
    </location>
</feature>
<reference key="1">
    <citation type="journal article" date="2005" name="J. Cell Biol.">
        <title>Palmitoylation regulates plasma membrane-nuclear shuttling of R7BP, a novel membrane anchor for the RGS7 family.</title>
        <authorList>
            <person name="Drenan R.M."/>
            <person name="Doupnik C.A."/>
            <person name="Boyle M.P."/>
            <person name="Muglia L.J."/>
            <person name="Huettner J.E."/>
            <person name="Linder M.E."/>
            <person name="Blumer K.J."/>
        </authorList>
    </citation>
    <scope>NUCLEOTIDE SEQUENCE [MRNA]</scope>
    <scope>FUNCTION</scope>
    <scope>SUBCELLULAR LOCATION</scope>
    <scope>TISSUE SPECIFICITY</scope>
    <scope>INTERACTION WITH RGS6; RGS7; RGS9 AND RGS11</scope>
    <scope>PALMITOYLATION AT CYS-252 AND CYS-253</scope>
    <scope>MUTAGENESIS OF CYS-252 AND CYS-253</scope>
    <source>
        <strain>C57BL/6J</strain>
    </source>
</reference>
<reference key="2">
    <citation type="journal article" date="2005" name="Science">
        <title>The transcriptional landscape of the mammalian genome.</title>
        <authorList>
            <person name="Carninci P."/>
            <person name="Kasukawa T."/>
            <person name="Katayama S."/>
            <person name="Gough J."/>
            <person name="Frith M.C."/>
            <person name="Maeda N."/>
            <person name="Oyama R."/>
            <person name="Ravasi T."/>
            <person name="Lenhard B."/>
            <person name="Wells C."/>
            <person name="Kodzius R."/>
            <person name="Shimokawa K."/>
            <person name="Bajic V.B."/>
            <person name="Brenner S.E."/>
            <person name="Batalov S."/>
            <person name="Forrest A.R."/>
            <person name="Zavolan M."/>
            <person name="Davis M.J."/>
            <person name="Wilming L.G."/>
            <person name="Aidinis V."/>
            <person name="Allen J.E."/>
            <person name="Ambesi-Impiombato A."/>
            <person name="Apweiler R."/>
            <person name="Aturaliya R.N."/>
            <person name="Bailey T.L."/>
            <person name="Bansal M."/>
            <person name="Baxter L."/>
            <person name="Beisel K.W."/>
            <person name="Bersano T."/>
            <person name="Bono H."/>
            <person name="Chalk A.M."/>
            <person name="Chiu K.P."/>
            <person name="Choudhary V."/>
            <person name="Christoffels A."/>
            <person name="Clutterbuck D.R."/>
            <person name="Crowe M.L."/>
            <person name="Dalla E."/>
            <person name="Dalrymple B.P."/>
            <person name="de Bono B."/>
            <person name="Della Gatta G."/>
            <person name="di Bernardo D."/>
            <person name="Down T."/>
            <person name="Engstrom P."/>
            <person name="Fagiolini M."/>
            <person name="Faulkner G."/>
            <person name="Fletcher C.F."/>
            <person name="Fukushima T."/>
            <person name="Furuno M."/>
            <person name="Futaki S."/>
            <person name="Gariboldi M."/>
            <person name="Georgii-Hemming P."/>
            <person name="Gingeras T.R."/>
            <person name="Gojobori T."/>
            <person name="Green R.E."/>
            <person name="Gustincich S."/>
            <person name="Harbers M."/>
            <person name="Hayashi Y."/>
            <person name="Hensch T.K."/>
            <person name="Hirokawa N."/>
            <person name="Hill D."/>
            <person name="Huminiecki L."/>
            <person name="Iacono M."/>
            <person name="Ikeo K."/>
            <person name="Iwama A."/>
            <person name="Ishikawa T."/>
            <person name="Jakt M."/>
            <person name="Kanapin A."/>
            <person name="Katoh M."/>
            <person name="Kawasawa Y."/>
            <person name="Kelso J."/>
            <person name="Kitamura H."/>
            <person name="Kitano H."/>
            <person name="Kollias G."/>
            <person name="Krishnan S.P."/>
            <person name="Kruger A."/>
            <person name="Kummerfeld S.K."/>
            <person name="Kurochkin I.V."/>
            <person name="Lareau L.F."/>
            <person name="Lazarevic D."/>
            <person name="Lipovich L."/>
            <person name="Liu J."/>
            <person name="Liuni S."/>
            <person name="McWilliam S."/>
            <person name="Madan Babu M."/>
            <person name="Madera M."/>
            <person name="Marchionni L."/>
            <person name="Matsuda H."/>
            <person name="Matsuzawa S."/>
            <person name="Miki H."/>
            <person name="Mignone F."/>
            <person name="Miyake S."/>
            <person name="Morris K."/>
            <person name="Mottagui-Tabar S."/>
            <person name="Mulder N."/>
            <person name="Nakano N."/>
            <person name="Nakauchi H."/>
            <person name="Ng P."/>
            <person name="Nilsson R."/>
            <person name="Nishiguchi S."/>
            <person name="Nishikawa S."/>
            <person name="Nori F."/>
            <person name="Ohara O."/>
            <person name="Okazaki Y."/>
            <person name="Orlando V."/>
            <person name="Pang K.C."/>
            <person name="Pavan W.J."/>
            <person name="Pavesi G."/>
            <person name="Pesole G."/>
            <person name="Petrovsky N."/>
            <person name="Piazza S."/>
            <person name="Reed J."/>
            <person name="Reid J.F."/>
            <person name="Ring B.Z."/>
            <person name="Ringwald M."/>
            <person name="Rost B."/>
            <person name="Ruan Y."/>
            <person name="Salzberg S.L."/>
            <person name="Sandelin A."/>
            <person name="Schneider C."/>
            <person name="Schoenbach C."/>
            <person name="Sekiguchi K."/>
            <person name="Semple C.A."/>
            <person name="Seno S."/>
            <person name="Sessa L."/>
            <person name="Sheng Y."/>
            <person name="Shibata Y."/>
            <person name="Shimada H."/>
            <person name="Shimada K."/>
            <person name="Silva D."/>
            <person name="Sinclair B."/>
            <person name="Sperling S."/>
            <person name="Stupka E."/>
            <person name="Sugiura K."/>
            <person name="Sultana R."/>
            <person name="Takenaka Y."/>
            <person name="Taki K."/>
            <person name="Tammoja K."/>
            <person name="Tan S.L."/>
            <person name="Tang S."/>
            <person name="Taylor M.S."/>
            <person name="Tegner J."/>
            <person name="Teichmann S.A."/>
            <person name="Ueda H.R."/>
            <person name="van Nimwegen E."/>
            <person name="Verardo R."/>
            <person name="Wei C.L."/>
            <person name="Yagi K."/>
            <person name="Yamanishi H."/>
            <person name="Zabarovsky E."/>
            <person name="Zhu S."/>
            <person name="Zimmer A."/>
            <person name="Hide W."/>
            <person name="Bult C."/>
            <person name="Grimmond S.M."/>
            <person name="Teasdale R.D."/>
            <person name="Liu E.T."/>
            <person name="Brusic V."/>
            <person name="Quackenbush J."/>
            <person name="Wahlestedt C."/>
            <person name="Mattick J.S."/>
            <person name="Hume D.A."/>
            <person name="Kai C."/>
            <person name="Sasaki D."/>
            <person name="Tomaru Y."/>
            <person name="Fukuda S."/>
            <person name="Kanamori-Katayama M."/>
            <person name="Suzuki M."/>
            <person name="Aoki J."/>
            <person name="Arakawa T."/>
            <person name="Iida J."/>
            <person name="Imamura K."/>
            <person name="Itoh M."/>
            <person name="Kato T."/>
            <person name="Kawaji H."/>
            <person name="Kawagashira N."/>
            <person name="Kawashima T."/>
            <person name="Kojima M."/>
            <person name="Kondo S."/>
            <person name="Konno H."/>
            <person name="Nakano K."/>
            <person name="Ninomiya N."/>
            <person name="Nishio T."/>
            <person name="Okada M."/>
            <person name="Plessy C."/>
            <person name="Shibata K."/>
            <person name="Shiraki T."/>
            <person name="Suzuki S."/>
            <person name="Tagami M."/>
            <person name="Waki K."/>
            <person name="Watahiki A."/>
            <person name="Okamura-Oho Y."/>
            <person name="Suzuki H."/>
            <person name="Kawai J."/>
            <person name="Hayashizaki Y."/>
        </authorList>
    </citation>
    <scope>NUCLEOTIDE SEQUENCE [LARGE SCALE MRNA]</scope>
    <source>
        <strain>C57BL/6J</strain>
        <tissue>Brain cortex</tissue>
        <tissue>Cerebellum</tissue>
        <tissue>Retina</tissue>
    </source>
</reference>
<reference key="3">
    <citation type="journal article" date="2004" name="Genome Res.">
        <title>The status, quality, and expansion of the NIH full-length cDNA project: the Mammalian Gene Collection (MGC).</title>
        <authorList>
            <consortium name="The MGC Project Team"/>
        </authorList>
    </citation>
    <scope>NUCLEOTIDE SEQUENCE [LARGE SCALE MRNA]</scope>
</reference>
<reference key="4">
    <citation type="journal article" date="2005" name="J. Biol. Chem.">
        <title>R7BP, a novel neuronal protein interacting with RGS proteins of the R7 family.</title>
        <authorList>
            <person name="Martemyanov K.A."/>
            <person name="Yoo P.J."/>
            <person name="Skiba N.P."/>
            <person name="Arshavsky V.Y."/>
        </authorList>
    </citation>
    <scope>TISSUE SPECIFICITY</scope>
    <scope>INTERACTION WITH RGS6; RGS7; RGS9 AND RGS11</scope>
</reference>
<reference key="5">
    <citation type="journal article" date="2006" name="J. Biol. Chem.">
        <title>Subcellular targeting of RGS9-2 is controlled by multiple molecular determinants on its membrane anchor, R7BP.</title>
        <authorList>
            <person name="Song J.H."/>
            <person name="Waataja J.J."/>
            <person name="Martemyanov K.A."/>
        </authorList>
    </citation>
    <scope>FUNCTION</scope>
    <scope>SUBCELLULAR LOCATION</scope>
    <scope>NUCLEAR LOCALIZATION SIGNAL</scope>
    <scope>PALMITOYLATION AT CYS-252 AND CYS-253</scope>
    <scope>MUTAGENESIS OF ARG-243; ARG-246 AND 252-CYS-CYS-253</scope>
</reference>
<reference key="6">
    <citation type="journal article" date="2006" name="J. Biol. Chem.">
        <title>R7BP augments the function of RGS7*Gbeta5 complexes by a plasma membrane-targeting mechanism.</title>
        <authorList>
            <person name="Drenan R.M."/>
            <person name="Doupnik C.A."/>
            <person name="Jayaraman M."/>
            <person name="Buchwalter A.L."/>
            <person name="Kaltenbronn K.M."/>
            <person name="Huettner J.E."/>
            <person name="Linder M.E."/>
            <person name="Blumer K.J."/>
        </authorList>
    </citation>
    <scope>FUNCTION</scope>
    <scope>SUBCELLULAR LOCATION</scope>
    <scope>NUCLEAR LOCALIZATION SIGNAL DOMAIN</scope>
    <scope>MUTAGENESIS OF 242-ARG--ARG-247</scope>
</reference>
<reference key="7">
    <citation type="journal article" date="2007" name="J. Biol. Chem.">
        <title>The membrane anchor R7BP controls the proteolytic stability of the striatal specific RGS protein, RGS9-2.</title>
        <authorList>
            <person name="Anderson G.R."/>
            <person name="Semenov A."/>
            <person name="Song J.H."/>
            <person name="Martemyanov K.A."/>
        </authorList>
    </citation>
    <scope>FUNCTION</scope>
</reference>
<reference key="8">
    <citation type="journal article" date="2010" name="Cell">
        <title>A tissue-specific atlas of mouse protein phosphorylation and expression.</title>
        <authorList>
            <person name="Huttlin E.L."/>
            <person name="Jedrychowski M.P."/>
            <person name="Elias J.E."/>
            <person name="Goswami T."/>
            <person name="Rad R."/>
            <person name="Beausoleil S.A."/>
            <person name="Villen J."/>
            <person name="Haas W."/>
            <person name="Sowa M.E."/>
            <person name="Gygi S.P."/>
        </authorList>
    </citation>
    <scope>IDENTIFICATION BY MASS SPECTROMETRY [LARGE SCALE ANALYSIS]</scope>
    <source>
        <tissue>Brain</tissue>
    </source>
</reference>
<reference key="9">
    <citation type="journal article" date="2011" name="J. Biol. Chem.">
        <title>Gi/o signaling and the palmitoyltransferase DHHC2 regulate palmitate cycling and shuttling of RGS7 family-binding protein.</title>
        <authorList>
            <person name="Jia L."/>
            <person name="Linder M.E."/>
            <person name="Blumer K.J."/>
        </authorList>
    </citation>
    <scope>SUBCELLULAR LOCATION</scope>
    <scope>PALMITOYLATION</scope>
</reference>
<proteinExistence type="evidence at protein level"/>